<reference key="1">
    <citation type="journal article" date="2006" name="J. Bacteriol.">
        <title>Whole-genome sequence of Listeria welshimeri reveals common steps in genome reduction with Listeria innocua as compared to Listeria monocytogenes.</title>
        <authorList>
            <person name="Hain T."/>
            <person name="Steinweg C."/>
            <person name="Kuenne C.T."/>
            <person name="Billion A."/>
            <person name="Ghai R."/>
            <person name="Chatterjee S.S."/>
            <person name="Domann E."/>
            <person name="Kaerst U."/>
            <person name="Goesmann A."/>
            <person name="Bekel T."/>
            <person name="Bartels D."/>
            <person name="Kaiser O."/>
            <person name="Meyer F."/>
            <person name="Puehler A."/>
            <person name="Weisshaar B."/>
            <person name="Wehland J."/>
            <person name="Liang C."/>
            <person name="Dandekar T."/>
            <person name="Lampidis R."/>
            <person name="Kreft J."/>
            <person name="Goebel W."/>
            <person name="Chakraborty T."/>
        </authorList>
    </citation>
    <scope>NUCLEOTIDE SEQUENCE [LARGE SCALE GENOMIC DNA]</scope>
    <source>
        <strain>ATCC 35897 / DSM 20650 / CCUG 15529 / CIP 8149 / NCTC 11857 / SLCC 5334 / V8</strain>
    </source>
</reference>
<evidence type="ECO:0000255" key="1">
    <source>
        <dbReference type="HAMAP-Rule" id="MF_00021"/>
    </source>
</evidence>
<name>THII_LISW6</name>
<keyword id="KW-0067">ATP-binding</keyword>
<keyword id="KW-0963">Cytoplasm</keyword>
<keyword id="KW-0547">Nucleotide-binding</keyword>
<keyword id="KW-0694">RNA-binding</keyword>
<keyword id="KW-0784">Thiamine biosynthesis</keyword>
<keyword id="KW-0808">Transferase</keyword>
<keyword id="KW-0820">tRNA-binding</keyword>
<feature type="chain" id="PRO_1000074243" description="Probable tRNA sulfurtransferase">
    <location>
        <begin position="1"/>
        <end position="403"/>
    </location>
</feature>
<feature type="domain" description="THUMP" evidence="1">
    <location>
        <begin position="60"/>
        <end position="165"/>
    </location>
</feature>
<feature type="binding site" evidence="1">
    <location>
        <begin position="183"/>
        <end position="184"/>
    </location>
    <ligand>
        <name>ATP</name>
        <dbReference type="ChEBI" id="CHEBI:30616"/>
    </ligand>
</feature>
<feature type="binding site" evidence="1">
    <location>
        <begin position="208"/>
        <end position="209"/>
    </location>
    <ligand>
        <name>ATP</name>
        <dbReference type="ChEBI" id="CHEBI:30616"/>
    </ligand>
</feature>
<feature type="binding site" evidence="1">
    <location>
        <position position="265"/>
    </location>
    <ligand>
        <name>ATP</name>
        <dbReference type="ChEBI" id="CHEBI:30616"/>
    </ligand>
</feature>
<feature type="binding site" evidence="1">
    <location>
        <position position="287"/>
    </location>
    <ligand>
        <name>ATP</name>
        <dbReference type="ChEBI" id="CHEBI:30616"/>
    </ligand>
</feature>
<feature type="binding site" evidence="1">
    <location>
        <position position="296"/>
    </location>
    <ligand>
        <name>ATP</name>
        <dbReference type="ChEBI" id="CHEBI:30616"/>
    </ligand>
</feature>
<protein>
    <recommendedName>
        <fullName evidence="1">Probable tRNA sulfurtransferase</fullName>
        <ecNumber evidence="1">2.8.1.4</ecNumber>
    </recommendedName>
    <alternativeName>
        <fullName evidence="1">Sulfur carrier protein ThiS sulfurtransferase</fullName>
    </alternativeName>
    <alternativeName>
        <fullName evidence="1">Thiamine biosynthesis protein ThiI</fullName>
    </alternativeName>
    <alternativeName>
        <fullName evidence="1">tRNA 4-thiouridine synthase</fullName>
    </alternativeName>
</protein>
<organism>
    <name type="scientific">Listeria welshimeri serovar 6b (strain ATCC 35897 / DSM 20650 / CCUG 15529 / CIP 8149 / NCTC 11857 / SLCC 5334 / V8)</name>
    <dbReference type="NCBI Taxonomy" id="386043"/>
    <lineage>
        <taxon>Bacteria</taxon>
        <taxon>Bacillati</taxon>
        <taxon>Bacillota</taxon>
        <taxon>Bacilli</taxon>
        <taxon>Bacillales</taxon>
        <taxon>Listeriaceae</taxon>
        <taxon>Listeria</taxon>
    </lineage>
</organism>
<dbReference type="EC" id="2.8.1.4" evidence="1"/>
<dbReference type="EMBL" id="AM263198">
    <property type="protein sequence ID" value="CAK21023.1"/>
    <property type="molecule type" value="Genomic_DNA"/>
</dbReference>
<dbReference type="RefSeq" id="WP_011702390.1">
    <property type="nucleotide sequence ID" value="NC_008555.1"/>
</dbReference>
<dbReference type="SMR" id="A0AJ41"/>
<dbReference type="STRING" id="386043.lwe1605"/>
<dbReference type="GeneID" id="61189482"/>
<dbReference type="KEGG" id="lwe:lwe1605"/>
<dbReference type="eggNOG" id="COG0301">
    <property type="taxonomic scope" value="Bacteria"/>
</dbReference>
<dbReference type="HOGENOM" id="CLU_037952_4_0_9"/>
<dbReference type="OrthoDB" id="9773948at2"/>
<dbReference type="UniPathway" id="UPA00060"/>
<dbReference type="Proteomes" id="UP000000779">
    <property type="component" value="Chromosome"/>
</dbReference>
<dbReference type="GO" id="GO:0005829">
    <property type="term" value="C:cytosol"/>
    <property type="evidence" value="ECO:0007669"/>
    <property type="project" value="TreeGrafter"/>
</dbReference>
<dbReference type="GO" id="GO:0005524">
    <property type="term" value="F:ATP binding"/>
    <property type="evidence" value="ECO:0007669"/>
    <property type="project" value="UniProtKB-UniRule"/>
</dbReference>
<dbReference type="GO" id="GO:0004810">
    <property type="term" value="F:CCA tRNA nucleotidyltransferase activity"/>
    <property type="evidence" value="ECO:0007669"/>
    <property type="project" value="InterPro"/>
</dbReference>
<dbReference type="GO" id="GO:0000049">
    <property type="term" value="F:tRNA binding"/>
    <property type="evidence" value="ECO:0007669"/>
    <property type="project" value="UniProtKB-UniRule"/>
</dbReference>
<dbReference type="GO" id="GO:0140741">
    <property type="term" value="F:tRNA-uracil-4 sulfurtransferase activity"/>
    <property type="evidence" value="ECO:0007669"/>
    <property type="project" value="UniProtKB-EC"/>
</dbReference>
<dbReference type="GO" id="GO:0009228">
    <property type="term" value="P:thiamine biosynthetic process"/>
    <property type="evidence" value="ECO:0007669"/>
    <property type="project" value="UniProtKB-KW"/>
</dbReference>
<dbReference type="GO" id="GO:0009229">
    <property type="term" value="P:thiamine diphosphate biosynthetic process"/>
    <property type="evidence" value="ECO:0007669"/>
    <property type="project" value="UniProtKB-UniRule"/>
</dbReference>
<dbReference type="GO" id="GO:0052837">
    <property type="term" value="P:thiazole biosynthetic process"/>
    <property type="evidence" value="ECO:0007669"/>
    <property type="project" value="TreeGrafter"/>
</dbReference>
<dbReference type="GO" id="GO:0002937">
    <property type="term" value="P:tRNA 4-thiouridine biosynthesis"/>
    <property type="evidence" value="ECO:0007669"/>
    <property type="project" value="TreeGrafter"/>
</dbReference>
<dbReference type="CDD" id="cd01712">
    <property type="entry name" value="PPase_ThiI"/>
    <property type="match status" value="1"/>
</dbReference>
<dbReference type="CDD" id="cd11716">
    <property type="entry name" value="THUMP_ThiI"/>
    <property type="match status" value="1"/>
</dbReference>
<dbReference type="FunFam" id="3.40.50.620:FF:000053">
    <property type="entry name" value="Probable tRNA sulfurtransferase"/>
    <property type="match status" value="1"/>
</dbReference>
<dbReference type="Gene3D" id="3.30.2130.30">
    <property type="match status" value="1"/>
</dbReference>
<dbReference type="Gene3D" id="3.40.50.620">
    <property type="entry name" value="HUPs"/>
    <property type="match status" value="1"/>
</dbReference>
<dbReference type="HAMAP" id="MF_00021">
    <property type="entry name" value="ThiI"/>
    <property type="match status" value="1"/>
</dbReference>
<dbReference type="InterPro" id="IPR014729">
    <property type="entry name" value="Rossmann-like_a/b/a_fold"/>
</dbReference>
<dbReference type="InterPro" id="IPR020536">
    <property type="entry name" value="ThiI_AANH"/>
</dbReference>
<dbReference type="InterPro" id="IPR054173">
    <property type="entry name" value="ThiI_fer"/>
</dbReference>
<dbReference type="InterPro" id="IPR049961">
    <property type="entry name" value="ThiI_N"/>
</dbReference>
<dbReference type="InterPro" id="IPR004114">
    <property type="entry name" value="THUMP_dom"/>
</dbReference>
<dbReference type="InterPro" id="IPR049962">
    <property type="entry name" value="THUMP_ThiI"/>
</dbReference>
<dbReference type="InterPro" id="IPR003720">
    <property type="entry name" value="tRNA_STrfase"/>
</dbReference>
<dbReference type="InterPro" id="IPR050102">
    <property type="entry name" value="tRNA_sulfurtransferase_ThiI"/>
</dbReference>
<dbReference type="NCBIfam" id="TIGR00342">
    <property type="entry name" value="tRNA uracil 4-sulfurtransferase ThiI"/>
    <property type="match status" value="1"/>
</dbReference>
<dbReference type="PANTHER" id="PTHR43209">
    <property type="entry name" value="TRNA SULFURTRANSFERASE"/>
    <property type="match status" value="1"/>
</dbReference>
<dbReference type="PANTHER" id="PTHR43209:SF1">
    <property type="entry name" value="TRNA SULFURTRANSFERASE"/>
    <property type="match status" value="1"/>
</dbReference>
<dbReference type="Pfam" id="PF02568">
    <property type="entry name" value="ThiI"/>
    <property type="match status" value="1"/>
</dbReference>
<dbReference type="Pfam" id="PF22025">
    <property type="entry name" value="ThiI_fer"/>
    <property type="match status" value="1"/>
</dbReference>
<dbReference type="Pfam" id="PF02926">
    <property type="entry name" value="THUMP"/>
    <property type="match status" value="1"/>
</dbReference>
<dbReference type="SMART" id="SM00981">
    <property type="entry name" value="THUMP"/>
    <property type="match status" value="1"/>
</dbReference>
<dbReference type="SUPFAM" id="SSF52402">
    <property type="entry name" value="Adenine nucleotide alpha hydrolases-like"/>
    <property type="match status" value="1"/>
</dbReference>
<dbReference type="SUPFAM" id="SSF143437">
    <property type="entry name" value="THUMP domain-like"/>
    <property type="match status" value="1"/>
</dbReference>
<dbReference type="PROSITE" id="PS51165">
    <property type="entry name" value="THUMP"/>
    <property type="match status" value="1"/>
</dbReference>
<gene>
    <name evidence="1" type="primary">thiI</name>
    <name type="ordered locus">lwe1605</name>
</gene>
<comment type="function">
    <text evidence="1">Catalyzes the ATP-dependent transfer of a sulfur to tRNA to produce 4-thiouridine in position 8 of tRNAs, which functions as a near-UV photosensor. Also catalyzes the transfer of sulfur to the sulfur carrier protein ThiS, forming ThiS-thiocarboxylate. This is a step in the synthesis of thiazole, in the thiamine biosynthesis pathway. The sulfur is donated as persulfide by IscS.</text>
</comment>
<comment type="catalytic activity">
    <reaction evidence="1">
        <text>[ThiI sulfur-carrier protein]-S-sulfanyl-L-cysteine + a uridine in tRNA + 2 reduced [2Fe-2S]-[ferredoxin] + ATP + H(+) = [ThiI sulfur-carrier protein]-L-cysteine + a 4-thiouridine in tRNA + 2 oxidized [2Fe-2S]-[ferredoxin] + AMP + diphosphate</text>
        <dbReference type="Rhea" id="RHEA:24176"/>
        <dbReference type="Rhea" id="RHEA-COMP:10000"/>
        <dbReference type="Rhea" id="RHEA-COMP:10001"/>
        <dbReference type="Rhea" id="RHEA-COMP:13337"/>
        <dbReference type="Rhea" id="RHEA-COMP:13338"/>
        <dbReference type="Rhea" id="RHEA-COMP:13339"/>
        <dbReference type="Rhea" id="RHEA-COMP:13340"/>
        <dbReference type="ChEBI" id="CHEBI:15378"/>
        <dbReference type="ChEBI" id="CHEBI:29950"/>
        <dbReference type="ChEBI" id="CHEBI:30616"/>
        <dbReference type="ChEBI" id="CHEBI:33019"/>
        <dbReference type="ChEBI" id="CHEBI:33737"/>
        <dbReference type="ChEBI" id="CHEBI:33738"/>
        <dbReference type="ChEBI" id="CHEBI:61963"/>
        <dbReference type="ChEBI" id="CHEBI:65315"/>
        <dbReference type="ChEBI" id="CHEBI:136798"/>
        <dbReference type="ChEBI" id="CHEBI:456215"/>
        <dbReference type="EC" id="2.8.1.4"/>
    </reaction>
</comment>
<comment type="catalytic activity">
    <reaction evidence="1">
        <text>[ThiS sulfur-carrier protein]-C-terminal Gly-Gly-AMP + S-sulfanyl-L-cysteinyl-[cysteine desulfurase] + AH2 = [ThiS sulfur-carrier protein]-C-terminal-Gly-aminoethanethioate + L-cysteinyl-[cysteine desulfurase] + A + AMP + 2 H(+)</text>
        <dbReference type="Rhea" id="RHEA:43340"/>
        <dbReference type="Rhea" id="RHEA-COMP:12157"/>
        <dbReference type="Rhea" id="RHEA-COMP:12158"/>
        <dbReference type="Rhea" id="RHEA-COMP:12910"/>
        <dbReference type="Rhea" id="RHEA-COMP:19908"/>
        <dbReference type="ChEBI" id="CHEBI:13193"/>
        <dbReference type="ChEBI" id="CHEBI:15378"/>
        <dbReference type="ChEBI" id="CHEBI:17499"/>
        <dbReference type="ChEBI" id="CHEBI:29950"/>
        <dbReference type="ChEBI" id="CHEBI:61963"/>
        <dbReference type="ChEBI" id="CHEBI:90618"/>
        <dbReference type="ChEBI" id="CHEBI:232372"/>
        <dbReference type="ChEBI" id="CHEBI:456215"/>
    </reaction>
</comment>
<comment type="pathway">
    <text evidence="1">Cofactor biosynthesis; thiamine diphosphate biosynthesis.</text>
</comment>
<comment type="subcellular location">
    <subcellularLocation>
        <location evidence="1">Cytoplasm</location>
    </subcellularLocation>
</comment>
<comment type="similarity">
    <text evidence="1">Belongs to the ThiI family.</text>
</comment>
<sequence>MEFDRILIRYGELSTKGKNRKQFVTRLAHNVKRAMKDLPEVRIHGERDRMYIILNGEDHKLAEERLKPIFGIQSFSPAVRVNLELDEVKNAALALVQDVHEQNGTFKVAARRSHREFPLDSNEINQEIGAYVLQNIEDLSVNVKNPDVKLTIDVRKEGVFLSCRTIIGAAGLPVGSSGRAMLMLSGGIDSPVAGYLAQKRGVEIEAVHFHSPPYTSEQAKQKAVDLAAKLAKYGGEVKMHIVPFTEIQEMIKQQIPESVIMTVTRRMMLKITDELRRKRNGLAIVNGESLGQVASQTLESMLAINAVTTTPIIRPVVSMDKNEIIQIAQKIDTYNLSVQPFEDCCTIFTPPSPKTKPKLDKIERYESFTDFDSLITKALDNIETITVNITENTQVKDEFADLF</sequence>
<proteinExistence type="inferred from homology"/>
<accession>A0AJ41</accession>